<protein>
    <recommendedName>
        <fullName evidence="1">Type III pantothenate kinase</fullName>
        <ecNumber evidence="1">2.7.1.33</ecNumber>
    </recommendedName>
    <alternativeName>
        <fullName evidence="1">PanK-III</fullName>
    </alternativeName>
    <alternativeName>
        <fullName evidence="1">Pantothenic acid kinase</fullName>
    </alternativeName>
</protein>
<feature type="chain" id="PRO_0000267581" description="Type III pantothenate kinase">
    <location>
        <begin position="1"/>
        <end position="257"/>
    </location>
</feature>
<feature type="active site" description="Proton acceptor" evidence="1">
    <location>
        <position position="109"/>
    </location>
</feature>
<feature type="binding site" evidence="1">
    <location>
        <begin position="6"/>
        <end position="13"/>
    </location>
    <ligand>
        <name>ATP</name>
        <dbReference type="ChEBI" id="CHEBI:30616"/>
    </ligand>
</feature>
<feature type="binding site" evidence="1">
    <location>
        <begin position="107"/>
        <end position="110"/>
    </location>
    <ligand>
        <name>substrate</name>
    </ligand>
</feature>
<feature type="binding site" evidence="1">
    <location>
        <position position="129"/>
    </location>
    <ligand>
        <name>K(+)</name>
        <dbReference type="ChEBI" id="CHEBI:29103"/>
    </ligand>
</feature>
<feature type="binding site" evidence="1">
    <location>
        <position position="132"/>
    </location>
    <ligand>
        <name>ATP</name>
        <dbReference type="ChEBI" id="CHEBI:30616"/>
    </ligand>
</feature>
<feature type="binding site" evidence="1">
    <location>
        <position position="184"/>
    </location>
    <ligand>
        <name>substrate</name>
    </ligand>
</feature>
<proteinExistence type="inferred from homology"/>
<evidence type="ECO:0000255" key="1">
    <source>
        <dbReference type="HAMAP-Rule" id="MF_01274"/>
    </source>
</evidence>
<organism>
    <name type="scientific">Cereibacter sphaeroides (strain ATCC 17023 / DSM 158 / JCM 6121 / CCUG 31486 / LMG 2827 / NBRC 12203 / NCIMB 8253 / ATH 2.4.1.)</name>
    <name type="common">Rhodobacter sphaeroides</name>
    <dbReference type="NCBI Taxonomy" id="272943"/>
    <lineage>
        <taxon>Bacteria</taxon>
        <taxon>Pseudomonadati</taxon>
        <taxon>Pseudomonadota</taxon>
        <taxon>Alphaproteobacteria</taxon>
        <taxon>Rhodobacterales</taxon>
        <taxon>Paracoccaceae</taxon>
        <taxon>Cereibacter</taxon>
    </lineage>
</organism>
<name>COAX_CERS4</name>
<reference key="1">
    <citation type="submission" date="2005-09" db="EMBL/GenBank/DDBJ databases">
        <title>Complete sequence of chromosome 1 of Rhodobacter sphaeroides 2.4.1.</title>
        <authorList>
            <person name="Copeland A."/>
            <person name="Lucas S."/>
            <person name="Lapidus A."/>
            <person name="Barry K."/>
            <person name="Detter J.C."/>
            <person name="Glavina T."/>
            <person name="Hammon N."/>
            <person name="Israni S."/>
            <person name="Pitluck S."/>
            <person name="Richardson P."/>
            <person name="Mackenzie C."/>
            <person name="Choudhary M."/>
            <person name="Larimer F."/>
            <person name="Hauser L.J."/>
            <person name="Land M."/>
            <person name="Donohue T.J."/>
            <person name="Kaplan S."/>
        </authorList>
    </citation>
    <scope>NUCLEOTIDE SEQUENCE [LARGE SCALE GENOMIC DNA]</scope>
    <source>
        <strain>ATCC 17023 / DSM 158 / JCM 6121 / CCUG 31486 / LMG 2827 / NBRC 12203 / NCIMB 8253 / ATH 2.4.1.</strain>
    </source>
</reference>
<gene>
    <name evidence="1" type="primary">coaX</name>
    <name type="ordered locus">RHOS4_11240</name>
    <name type="ORF">RSP_2533</name>
</gene>
<accession>Q3J3E2</accession>
<keyword id="KW-0067">ATP-binding</keyword>
<keyword id="KW-0173">Coenzyme A biosynthesis</keyword>
<keyword id="KW-0963">Cytoplasm</keyword>
<keyword id="KW-0418">Kinase</keyword>
<keyword id="KW-0479">Metal-binding</keyword>
<keyword id="KW-0547">Nucleotide-binding</keyword>
<keyword id="KW-0630">Potassium</keyword>
<keyword id="KW-1185">Reference proteome</keyword>
<keyword id="KW-0808">Transferase</keyword>
<sequence>MLLAIDCGNTNTVFSIWDGTQFLATWRIATDHKRTADEYHVWLSTLLSLTKIEARISEAVISSTVPRVVFNLRVLCNRYYDCRPLVVGKPECRLPVAPRVDQGTTVGPDRLVNTVAGFHLHGGNLIVVDFGTATTFDVVDADGAYIGGVIAPGVNLSLEALHMAAAALPHVDVTKPQQAIGTNTVACIQSGVYWGYIGLVEGIVRQIRLERDSPMKVIATGGLAPLFDQGFNLFDRVEDDLTMQGLVLIHQYNKDLE</sequence>
<dbReference type="EC" id="2.7.1.33" evidence="1"/>
<dbReference type="EMBL" id="CP000143">
    <property type="protein sequence ID" value="ABA78692.1"/>
    <property type="molecule type" value="Genomic_DNA"/>
</dbReference>
<dbReference type="RefSeq" id="WP_009564427.1">
    <property type="nucleotide sequence ID" value="NZ_CP030271.1"/>
</dbReference>
<dbReference type="RefSeq" id="YP_352593.1">
    <property type="nucleotide sequence ID" value="NC_007493.2"/>
</dbReference>
<dbReference type="SMR" id="Q3J3E2"/>
<dbReference type="STRING" id="272943.RSP_2533"/>
<dbReference type="EnsemblBacteria" id="ABA78692">
    <property type="protein sequence ID" value="ABA78692"/>
    <property type="gene ID" value="RSP_2533"/>
</dbReference>
<dbReference type="KEGG" id="rsp:RSP_2533"/>
<dbReference type="PATRIC" id="fig|272943.9.peg.1452"/>
<dbReference type="eggNOG" id="COG1521">
    <property type="taxonomic scope" value="Bacteria"/>
</dbReference>
<dbReference type="OrthoDB" id="9804707at2"/>
<dbReference type="PhylomeDB" id="Q3J3E2"/>
<dbReference type="UniPathway" id="UPA00241">
    <property type="reaction ID" value="UER00352"/>
</dbReference>
<dbReference type="Proteomes" id="UP000002703">
    <property type="component" value="Chromosome 1"/>
</dbReference>
<dbReference type="GO" id="GO:0005737">
    <property type="term" value="C:cytoplasm"/>
    <property type="evidence" value="ECO:0007669"/>
    <property type="project" value="UniProtKB-SubCell"/>
</dbReference>
<dbReference type="GO" id="GO:0005524">
    <property type="term" value="F:ATP binding"/>
    <property type="evidence" value="ECO:0007669"/>
    <property type="project" value="UniProtKB-UniRule"/>
</dbReference>
<dbReference type="GO" id="GO:0046872">
    <property type="term" value="F:metal ion binding"/>
    <property type="evidence" value="ECO:0007669"/>
    <property type="project" value="UniProtKB-KW"/>
</dbReference>
<dbReference type="GO" id="GO:0004594">
    <property type="term" value="F:pantothenate kinase activity"/>
    <property type="evidence" value="ECO:0007669"/>
    <property type="project" value="UniProtKB-UniRule"/>
</dbReference>
<dbReference type="GO" id="GO:0015937">
    <property type="term" value="P:coenzyme A biosynthetic process"/>
    <property type="evidence" value="ECO:0007669"/>
    <property type="project" value="UniProtKB-UniRule"/>
</dbReference>
<dbReference type="CDD" id="cd24015">
    <property type="entry name" value="ASKHA_NBD_PanK-III"/>
    <property type="match status" value="1"/>
</dbReference>
<dbReference type="Gene3D" id="3.30.420.40">
    <property type="match status" value="2"/>
</dbReference>
<dbReference type="HAMAP" id="MF_01274">
    <property type="entry name" value="Pantothen_kinase_3"/>
    <property type="match status" value="1"/>
</dbReference>
<dbReference type="InterPro" id="IPR043129">
    <property type="entry name" value="ATPase_NBD"/>
</dbReference>
<dbReference type="InterPro" id="IPR004619">
    <property type="entry name" value="Type_III_PanK"/>
</dbReference>
<dbReference type="NCBIfam" id="TIGR00671">
    <property type="entry name" value="baf"/>
    <property type="match status" value="1"/>
</dbReference>
<dbReference type="NCBIfam" id="NF009844">
    <property type="entry name" value="PRK13318.1-2"/>
    <property type="match status" value="1"/>
</dbReference>
<dbReference type="NCBIfam" id="NF009848">
    <property type="entry name" value="PRK13318.1-6"/>
    <property type="match status" value="1"/>
</dbReference>
<dbReference type="NCBIfam" id="NF009855">
    <property type="entry name" value="PRK13321.1"/>
    <property type="match status" value="1"/>
</dbReference>
<dbReference type="PANTHER" id="PTHR34265">
    <property type="entry name" value="TYPE III PANTOTHENATE KINASE"/>
    <property type="match status" value="1"/>
</dbReference>
<dbReference type="PANTHER" id="PTHR34265:SF1">
    <property type="entry name" value="TYPE III PANTOTHENATE KINASE"/>
    <property type="match status" value="1"/>
</dbReference>
<dbReference type="Pfam" id="PF03309">
    <property type="entry name" value="Pan_kinase"/>
    <property type="match status" value="1"/>
</dbReference>
<dbReference type="SUPFAM" id="SSF53067">
    <property type="entry name" value="Actin-like ATPase domain"/>
    <property type="match status" value="2"/>
</dbReference>
<comment type="function">
    <text evidence="1">Catalyzes the phosphorylation of pantothenate (Pan), the first step in CoA biosynthesis.</text>
</comment>
<comment type="catalytic activity">
    <reaction evidence="1">
        <text>(R)-pantothenate + ATP = (R)-4'-phosphopantothenate + ADP + H(+)</text>
        <dbReference type="Rhea" id="RHEA:16373"/>
        <dbReference type="ChEBI" id="CHEBI:10986"/>
        <dbReference type="ChEBI" id="CHEBI:15378"/>
        <dbReference type="ChEBI" id="CHEBI:29032"/>
        <dbReference type="ChEBI" id="CHEBI:30616"/>
        <dbReference type="ChEBI" id="CHEBI:456216"/>
        <dbReference type="EC" id="2.7.1.33"/>
    </reaction>
</comment>
<comment type="cofactor">
    <cofactor evidence="1">
        <name>NH4(+)</name>
        <dbReference type="ChEBI" id="CHEBI:28938"/>
    </cofactor>
    <cofactor evidence="1">
        <name>K(+)</name>
        <dbReference type="ChEBI" id="CHEBI:29103"/>
    </cofactor>
    <text evidence="1">A monovalent cation. Ammonium or potassium.</text>
</comment>
<comment type="pathway">
    <text evidence="1">Cofactor biosynthesis; coenzyme A biosynthesis; CoA from (R)-pantothenate: step 1/5.</text>
</comment>
<comment type="subunit">
    <text evidence="1">Homodimer.</text>
</comment>
<comment type="subcellular location">
    <subcellularLocation>
        <location evidence="1">Cytoplasm</location>
    </subcellularLocation>
</comment>
<comment type="similarity">
    <text evidence="1">Belongs to the type III pantothenate kinase family.</text>
</comment>